<organism>
    <name type="scientific">Escherichia coli (strain K12)</name>
    <dbReference type="NCBI Taxonomy" id="83333"/>
    <lineage>
        <taxon>Bacteria</taxon>
        <taxon>Pseudomonadati</taxon>
        <taxon>Pseudomonadota</taxon>
        <taxon>Gammaproteobacteria</taxon>
        <taxon>Enterobacterales</taxon>
        <taxon>Enterobacteriaceae</taxon>
        <taxon>Escherichia</taxon>
    </lineage>
</organism>
<proteinExistence type="predicted"/>
<gene>
    <name type="primary">bax</name>
    <name type="ordered locus">b3570</name>
    <name type="ordered locus">JW5653</name>
</gene>
<evidence type="ECO:0000255" key="1"/>
<evidence type="ECO:0000256" key="2">
    <source>
        <dbReference type="SAM" id="MobiDB-lite"/>
    </source>
</evidence>
<evidence type="ECO:0000305" key="3"/>
<accession>P27297</accession>
<accession>Q2M7N3</accession>
<accession>Q6BF22</accession>
<dbReference type="EMBL" id="U00039">
    <property type="protein sequence ID" value="AAB18547.1"/>
    <property type="molecule type" value="Genomic_DNA"/>
</dbReference>
<dbReference type="EMBL" id="U00096">
    <property type="protein sequence ID" value="AAT48192.1"/>
    <property type="molecule type" value="Genomic_DNA"/>
</dbReference>
<dbReference type="EMBL" id="AP009048">
    <property type="protein sequence ID" value="BAE77723.1"/>
    <property type="molecule type" value="Genomic_DNA"/>
</dbReference>
<dbReference type="EMBL" id="X58994">
    <property type="status" value="NOT_ANNOTATED_CDS"/>
    <property type="molecule type" value="Genomic_DNA"/>
</dbReference>
<dbReference type="PIR" id="S47791">
    <property type="entry name" value="S47791"/>
</dbReference>
<dbReference type="RefSeq" id="WP_001297957.1">
    <property type="nucleotide sequence ID" value="NZ_STEB01000018.1"/>
</dbReference>
<dbReference type="RefSeq" id="YP_026230.1">
    <property type="nucleotide sequence ID" value="NC_000913.3"/>
</dbReference>
<dbReference type="SMR" id="P27297"/>
<dbReference type="BioGRID" id="4262545">
    <property type="interactions" value="12"/>
</dbReference>
<dbReference type="STRING" id="511145.b3570"/>
<dbReference type="CAZy" id="GH73">
    <property type="family name" value="Glycoside Hydrolase Family 73"/>
</dbReference>
<dbReference type="PaxDb" id="511145-b3570"/>
<dbReference type="EnsemblBacteria" id="AAT48192">
    <property type="protein sequence ID" value="AAT48192"/>
    <property type="gene ID" value="b3570"/>
</dbReference>
<dbReference type="GeneID" id="948089"/>
<dbReference type="KEGG" id="ecj:JW5653"/>
<dbReference type="KEGG" id="eco:b3570"/>
<dbReference type="KEGG" id="ecoc:C3026_19355"/>
<dbReference type="PATRIC" id="fig|511145.12.peg.3685"/>
<dbReference type="EchoBASE" id="EB1335"/>
<dbReference type="eggNOG" id="COG2992">
    <property type="taxonomic scope" value="Bacteria"/>
</dbReference>
<dbReference type="HOGENOM" id="CLU_061344_3_0_6"/>
<dbReference type="InParanoid" id="P27297"/>
<dbReference type="OMA" id="NLFGQWC"/>
<dbReference type="OrthoDB" id="9788155at2"/>
<dbReference type="PhylomeDB" id="P27297"/>
<dbReference type="BioCyc" id="EcoCyc:EG11360-MONOMER"/>
<dbReference type="PRO" id="PR:P27297"/>
<dbReference type="Proteomes" id="UP000000625">
    <property type="component" value="Chromosome"/>
</dbReference>
<dbReference type="GO" id="GO:0004040">
    <property type="term" value="F:amidase activity"/>
    <property type="evidence" value="ECO:0007669"/>
    <property type="project" value="InterPro"/>
</dbReference>
<dbReference type="GO" id="GO:0005524">
    <property type="term" value="F:ATP binding"/>
    <property type="evidence" value="ECO:0007669"/>
    <property type="project" value="UniProtKB-KW"/>
</dbReference>
<dbReference type="Gene3D" id="1.10.530.10">
    <property type="match status" value="1"/>
</dbReference>
<dbReference type="InterPro" id="IPR053195">
    <property type="entry name" value="Bax-like"/>
</dbReference>
<dbReference type="InterPro" id="IPR002901">
    <property type="entry name" value="MGlyc_endo_b_GlcNAc-like_dom"/>
</dbReference>
<dbReference type="NCBIfam" id="NF007681">
    <property type="entry name" value="PRK10356.1"/>
    <property type="match status" value="1"/>
</dbReference>
<dbReference type="PANTHER" id="PTHR40572">
    <property type="entry name" value="PROTEIN BAX"/>
    <property type="match status" value="1"/>
</dbReference>
<dbReference type="PANTHER" id="PTHR40572:SF1">
    <property type="entry name" value="PROTEIN BAX"/>
    <property type="match status" value="1"/>
</dbReference>
<dbReference type="Pfam" id="PF01832">
    <property type="entry name" value="Glucosaminidase"/>
    <property type="match status" value="1"/>
</dbReference>
<dbReference type="SMART" id="SM00047">
    <property type="entry name" value="LYZ2"/>
    <property type="match status" value="1"/>
</dbReference>
<sequence>MILTPIRRYGAMILMLLTLVFSSEVLAKTHTTTASQKSHLTKASNKQVSSKQEYSRNSAKSSSLPDLRKYPSGTPRKKAFLRTVMPYITSQNAAITAERNWLISKQYQGQWSPAERARLKDIAKRYKVKWSGNTRKIPWNTLLERVDIIPTSMVATMAAAESGWGTSKLARNNNNLFGMKCMKGRCTNAPGKVKGYSQFSSVKESVSAYVTNLNTHPAYSSFRKSRAQLRKADQEVTATAMIHKLKGYSTKGKSYNNYLFAMYQDNQRLIAAHM</sequence>
<name>BAX_ECOLI</name>
<feature type="chain" id="PRO_0000064836" description="Protein bax">
    <location>
        <begin position="1"/>
        <end position="274"/>
    </location>
</feature>
<feature type="region of interest" description="Disordered" evidence="2">
    <location>
        <begin position="32"/>
        <end position="74"/>
    </location>
</feature>
<feature type="compositionally biased region" description="Polar residues" evidence="2">
    <location>
        <begin position="32"/>
        <end position="64"/>
    </location>
</feature>
<feature type="binding site" evidence="1">
    <location>
        <begin position="247"/>
        <end position="254"/>
    </location>
    <ligand>
        <name>ATP</name>
        <dbReference type="ChEBI" id="CHEBI:30616"/>
    </ligand>
</feature>
<feature type="sequence conflict" description="In Ref. 1; AAB18547." evidence="3" ref="1">
    <original>C</original>
    <variation>S</variation>
    <location>
        <position position="181"/>
    </location>
</feature>
<reference key="1">
    <citation type="journal article" date="1994" name="Nucleic Acids Res.">
        <title>Analysis of the Escherichia coli genome. V. DNA sequence of the region from 76.0 to 81.5 minutes.</title>
        <authorList>
            <person name="Sofia H.J."/>
            <person name="Burland V."/>
            <person name="Daniels D.L."/>
            <person name="Plunkett G. III"/>
            <person name="Blattner F.R."/>
        </authorList>
    </citation>
    <scope>NUCLEOTIDE SEQUENCE [LARGE SCALE GENOMIC DNA]</scope>
    <source>
        <strain>K12 / MG1655 / ATCC 47076</strain>
    </source>
</reference>
<reference key="2">
    <citation type="journal article" date="1997" name="Science">
        <title>The complete genome sequence of Escherichia coli K-12.</title>
        <authorList>
            <person name="Blattner F.R."/>
            <person name="Plunkett G. III"/>
            <person name="Bloch C.A."/>
            <person name="Perna N.T."/>
            <person name="Burland V."/>
            <person name="Riley M."/>
            <person name="Collado-Vides J."/>
            <person name="Glasner J.D."/>
            <person name="Rode C.K."/>
            <person name="Mayhew G.F."/>
            <person name="Gregor J."/>
            <person name="Davis N.W."/>
            <person name="Kirkpatrick H.A."/>
            <person name="Goeden M.A."/>
            <person name="Rose D.J."/>
            <person name="Mau B."/>
            <person name="Shao Y."/>
        </authorList>
    </citation>
    <scope>NUCLEOTIDE SEQUENCE [LARGE SCALE GENOMIC DNA]</scope>
    <source>
        <strain>K12 / MG1655 / ATCC 47076</strain>
    </source>
</reference>
<reference key="3">
    <citation type="journal article" date="2006" name="Nucleic Acids Res.">
        <title>Escherichia coli K-12: a cooperatively developed annotation snapshot -- 2005.</title>
        <authorList>
            <person name="Riley M."/>
            <person name="Abe T."/>
            <person name="Arnaud M.B."/>
            <person name="Berlyn M.K.B."/>
            <person name="Blattner F.R."/>
            <person name="Chaudhuri R.R."/>
            <person name="Glasner J.D."/>
            <person name="Horiuchi T."/>
            <person name="Keseler I.M."/>
            <person name="Kosuge T."/>
            <person name="Mori H."/>
            <person name="Perna N.T."/>
            <person name="Plunkett G. III"/>
            <person name="Rudd K.E."/>
            <person name="Serres M.H."/>
            <person name="Thomas G.H."/>
            <person name="Thomson N.R."/>
            <person name="Wishart D."/>
            <person name="Wanner B.L."/>
        </authorList>
    </citation>
    <scope>SEQUENCE REVISION TO 181</scope>
</reference>
<reference key="4">
    <citation type="journal article" date="2006" name="Mol. Syst. Biol.">
        <title>Highly accurate genome sequences of Escherichia coli K-12 strains MG1655 and W3110.</title>
        <authorList>
            <person name="Hayashi K."/>
            <person name="Morooka N."/>
            <person name="Yamamoto Y."/>
            <person name="Fujita K."/>
            <person name="Isono K."/>
            <person name="Choi S."/>
            <person name="Ohtsubo E."/>
            <person name="Baba T."/>
            <person name="Wanner B.L."/>
            <person name="Mori H."/>
            <person name="Horiuchi T."/>
        </authorList>
    </citation>
    <scope>NUCLEOTIDE SEQUENCE [LARGE SCALE GENOMIC DNA]</scope>
    <source>
        <strain>K12 / W3110 / ATCC 27325 / DSM 5911</strain>
    </source>
</reference>
<reference key="5">
    <citation type="journal article" date="1992" name="J. Biol. Chem.">
        <title>Molecular characterization of the MalT-dependent periplasmic alpha-amylase of Escherichia coli encoded by malS.</title>
        <authorList>
            <person name="Schneider E."/>
            <person name="Freundlieb S."/>
            <person name="Tapio S."/>
            <person name="Boos W."/>
        </authorList>
    </citation>
    <scope>NUCLEOTIDE SEQUENCE [GENOMIC DNA] OF 1-159</scope>
    <source>
        <strain>K12</strain>
    </source>
</reference>
<keyword id="KW-0067">ATP-binding</keyword>
<keyword id="KW-0547">Nucleotide-binding</keyword>
<keyword id="KW-1185">Reference proteome</keyword>
<protein>
    <recommendedName>
        <fullName>Protein bax</fullName>
    </recommendedName>
</protein>